<sequence length="128" mass="13308">MTSIVDLTPSEPALIFTGNAAAKVSELIAEEGNPALKLRVYVSGGGCSGMQYGFAFEEAVNEDDTTVEKDGVVLLVDPTSLQYLQGAEIDYQEGLEGSRFVIKNPNATSSCSCGSSFSVDGGASCSSH</sequence>
<dbReference type="EMBL" id="AE017282">
    <property type="protein sequence ID" value="AAU90593.1"/>
    <property type="molecule type" value="Genomic_DNA"/>
</dbReference>
<dbReference type="SMR" id="Q60C62"/>
<dbReference type="STRING" id="243233.MCA0249"/>
<dbReference type="KEGG" id="mca:MCA0249"/>
<dbReference type="eggNOG" id="COG0316">
    <property type="taxonomic scope" value="Bacteria"/>
</dbReference>
<dbReference type="HOGENOM" id="CLU_069054_5_3_6"/>
<dbReference type="Proteomes" id="UP000006821">
    <property type="component" value="Chromosome"/>
</dbReference>
<dbReference type="GO" id="GO:0051537">
    <property type="term" value="F:2 iron, 2 sulfur cluster binding"/>
    <property type="evidence" value="ECO:0007669"/>
    <property type="project" value="TreeGrafter"/>
</dbReference>
<dbReference type="GO" id="GO:0051539">
    <property type="term" value="F:4 iron, 4 sulfur cluster binding"/>
    <property type="evidence" value="ECO:0007669"/>
    <property type="project" value="TreeGrafter"/>
</dbReference>
<dbReference type="GO" id="GO:0005506">
    <property type="term" value="F:iron ion binding"/>
    <property type="evidence" value="ECO:0007669"/>
    <property type="project" value="UniProtKB-UniRule"/>
</dbReference>
<dbReference type="GO" id="GO:0016226">
    <property type="term" value="P:iron-sulfur cluster assembly"/>
    <property type="evidence" value="ECO:0007669"/>
    <property type="project" value="UniProtKB-UniRule"/>
</dbReference>
<dbReference type="FunFam" id="2.60.300.12:FF:000002">
    <property type="entry name" value="Iron-sulfur cluster insertion protein ErpA"/>
    <property type="match status" value="1"/>
</dbReference>
<dbReference type="Gene3D" id="2.60.300.12">
    <property type="entry name" value="HesB-like domain"/>
    <property type="match status" value="1"/>
</dbReference>
<dbReference type="HAMAP" id="MF_01380">
    <property type="entry name" value="Fe_S_insert_ErpA"/>
    <property type="match status" value="1"/>
</dbReference>
<dbReference type="InterPro" id="IPR000361">
    <property type="entry name" value="FeS_biogenesis"/>
</dbReference>
<dbReference type="InterPro" id="IPR016092">
    <property type="entry name" value="FeS_cluster_insertion"/>
</dbReference>
<dbReference type="InterPro" id="IPR017870">
    <property type="entry name" value="FeS_cluster_insertion_CS"/>
</dbReference>
<dbReference type="InterPro" id="IPR023063">
    <property type="entry name" value="FeS_cluster_insertion_RrpA"/>
</dbReference>
<dbReference type="InterPro" id="IPR035903">
    <property type="entry name" value="HesB-like_dom_sf"/>
</dbReference>
<dbReference type="NCBIfam" id="TIGR00049">
    <property type="entry name" value="iron-sulfur cluster assembly accessory protein"/>
    <property type="match status" value="1"/>
</dbReference>
<dbReference type="NCBIfam" id="NF010147">
    <property type="entry name" value="PRK13623.1"/>
    <property type="match status" value="1"/>
</dbReference>
<dbReference type="PANTHER" id="PTHR43011">
    <property type="entry name" value="IRON-SULFUR CLUSTER ASSEMBLY 2 HOMOLOG, MITOCHONDRIAL"/>
    <property type="match status" value="1"/>
</dbReference>
<dbReference type="PANTHER" id="PTHR43011:SF1">
    <property type="entry name" value="IRON-SULFUR CLUSTER ASSEMBLY 2 HOMOLOG, MITOCHONDRIAL"/>
    <property type="match status" value="1"/>
</dbReference>
<dbReference type="Pfam" id="PF01521">
    <property type="entry name" value="Fe-S_biosyn"/>
    <property type="match status" value="1"/>
</dbReference>
<dbReference type="SUPFAM" id="SSF89360">
    <property type="entry name" value="HesB-like domain"/>
    <property type="match status" value="1"/>
</dbReference>
<dbReference type="PROSITE" id="PS01152">
    <property type="entry name" value="HESB"/>
    <property type="match status" value="1"/>
</dbReference>
<reference key="1">
    <citation type="journal article" date="2004" name="PLoS Biol.">
        <title>Genomic insights into methanotrophy: the complete genome sequence of Methylococcus capsulatus (Bath).</title>
        <authorList>
            <person name="Ward N.L."/>
            <person name="Larsen O."/>
            <person name="Sakwa J."/>
            <person name="Bruseth L."/>
            <person name="Khouri H.M."/>
            <person name="Durkin A.S."/>
            <person name="Dimitrov G."/>
            <person name="Jiang L."/>
            <person name="Scanlan D."/>
            <person name="Kang K.H."/>
            <person name="Lewis M.R."/>
            <person name="Nelson K.E."/>
            <person name="Methe B.A."/>
            <person name="Wu M."/>
            <person name="Heidelberg J.F."/>
            <person name="Paulsen I.T."/>
            <person name="Fouts D.E."/>
            <person name="Ravel J."/>
            <person name="Tettelin H."/>
            <person name="Ren Q."/>
            <person name="Read T.D."/>
            <person name="DeBoy R.T."/>
            <person name="Seshadri R."/>
            <person name="Salzberg S.L."/>
            <person name="Jensen H.B."/>
            <person name="Birkeland N.K."/>
            <person name="Nelson W.C."/>
            <person name="Dodson R.J."/>
            <person name="Grindhaug S.H."/>
            <person name="Holt I.E."/>
            <person name="Eidhammer I."/>
            <person name="Jonasen I."/>
            <person name="Vanaken S."/>
            <person name="Utterback T.R."/>
            <person name="Feldblyum T.V."/>
            <person name="Fraser C.M."/>
            <person name="Lillehaug J.R."/>
            <person name="Eisen J.A."/>
        </authorList>
    </citation>
    <scope>NUCLEOTIDE SEQUENCE [LARGE SCALE GENOMIC DNA]</scope>
    <source>
        <strain>ATCC 33009 / NCIMB 11132 / Bath</strain>
    </source>
</reference>
<keyword id="KW-0408">Iron</keyword>
<keyword id="KW-0411">Iron-sulfur</keyword>
<keyword id="KW-0479">Metal-binding</keyword>
<keyword id="KW-1185">Reference proteome</keyword>
<accession>Q60C62</accession>
<name>ERPA1_METCA</name>
<evidence type="ECO:0000255" key="1">
    <source>
        <dbReference type="HAMAP-Rule" id="MF_01380"/>
    </source>
</evidence>
<feature type="chain" id="PRO_0000311506" description="Iron-sulfur cluster insertion protein ErpA 1">
    <location>
        <begin position="1"/>
        <end position="128"/>
    </location>
</feature>
<feature type="binding site" evidence="1">
    <location>
        <position position="47"/>
    </location>
    <ligand>
        <name>iron-sulfur cluster</name>
        <dbReference type="ChEBI" id="CHEBI:30408"/>
    </ligand>
</feature>
<feature type="binding site" evidence="1">
    <location>
        <position position="111"/>
    </location>
    <ligand>
        <name>iron-sulfur cluster</name>
        <dbReference type="ChEBI" id="CHEBI:30408"/>
    </ligand>
</feature>
<feature type="binding site" evidence="1">
    <location>
        <position position="113"/>
    </location>
    <ligand>
        <name>iron-sulfur cluster</name>
        <dbReference type="ChEBI" id="CHEBI:30408"/>
    </ligand>
</feature>
<protein>
    <recommendedName>
        <fullName evidence="1">Iron-sulfur cluster insertion protein ErpA 1</fullName>
    </recommendedName>
</protein>
<proteinExistence type="inferred from homology"/>
<organism>
    <name type="scientific">Methylococcus capsulatus (strain ATCC 33009 / NCIMB 11132 / Bath)</name>
    <dbReference type="NCBI Taxonomy" id="243233"/>
    <lineage>
        <taxon>Bacteria</taxon>
        <taxon>Pseudomonadati</taxon>
        <taxon>Pseudomonadota</taxon>
        <taxon>Gammaproteobacteria</taxon>
        <taxon>Methylococcales</taxon>
        <taxon>Methylococcaceae</taxon>
        <taxon>Methylococcus</taxon>
    </lineage>
</organism>
<gene>
    <name evidence="1" type="primary">erpA1</name>
    <name type="ordered locus">MCA0249</name>
</gene>
<comment type="function">
    <text evidence="1">Required for insertion of 4Fe-4S clusters for at least IspG.</text>
</comment>
<comment type="cofactor">
    <cofactor evidence="1">
        <name>iron-sulfur cluster</name>
        <dbReference type="ChEBI" id="CHEBI:30408"/>
    </cofactor>
    <text evidence="1">Binds 1 iron-sulfur cluster per subunit.</text>
</comment>
<comment type="subunit">
    <text evidence="1">Homodimer.</text>
</comment>
<comment type="similarity">
    <text evidence="1">Belongs to the HesB/IscA family.</text>
</comment>